<sequence>MAVKWTGGHSSSILCLNANKDGLVASGGEGGDLVAWGEDGTPLGHMQLEGADDVTSVLFSASCPTKLYASHGETISVLDVRSLKGSLDHFHVNEEEINCLSLNETESLLASADDSGAIKILDLEKKKVTRSLKRHSNICSSVAFRPQRPQSLVSCGLDMQVMLWSLQKARPVWITNLQEDETEETEGPQTPGRLLNPALAHSVSVASCGNIFSCGAEDGKVRIFRVMGVKCERELGFKGHTLGVSQVCFLPESSLLLTGGNDGRIRLWDVSGKMEKLQKSPARHIHRKKAKRAACPTQGGNSRAPGAEDEGHAKILPKLDIEHGEKVNWLLSTKIKGNKSILVADQTSCVSVYPLNEL</sequence>
<dbReference type="EMBL" id="AK005105">
    <property type="protein sequence ID" value="BAB23821.1"/>
    <property type="molecule type" value="mRNA"/>
</dbReference>
<dbReference type="EMBL" id="BC028850">
    <property type="protein sequence ID" value="AAH28850.1"/>
    <property type="molecule type" value="mRNA"/>
</dbReference>
<dbReference type="CCDS" id="CCDS28118.1"/>
<dbReference type="RefSeq" id="NP_001172091.1">
    <property type="nucleotide sequence ID" value="NM_001185162.2"/>
</dbReference>
<dbReference type="RefSeq" id="NP_001386223.1">
    <property type="nucleotide sequence ID" value="NM_001399294.1"/>
</dbReference>
<dbReference type="RefSeq" id="NP_081174.1">
    <property type="nucleotide sequence ID" value="NM_026898.3"/>
</dbReference>
<dbReference type="RefSeq" id="XP_006522573.1">
    <property type="nucleotide sequence ID" value="XM_006522510.3"/>
</dbReference>
<dbReference type="SMR" id="Q9DB94"/>
<dbReference type="FunCoup" id="Q9DB94">
    <property type="interactions" value="2390"/>
</dbReference>
<dbReference type="STRING" id="10090.ENSMUSP00000023474"/>
<dbReference type="iPTMnet" id="Q9DB94"/>
<dbReference type="PhosphoSitePlus" id="Q9DB94"/>
<dbReference type="PaxDb" id="10090-ENSMUSP00000023474"/>
<dbReference type="PeptideAtlas" id="Q9DB94"/>
<dbReference type="ProteomicsDB" id="275202"/>
<dbReference type="Pumba" id="Q9DB94"/>
<dbReference type="Antibodypedia" id="2878">
    <property type="antibodies" value="62 antibodies from 17 providers"/>
</dbReference>
<dbReference type="Ensembl" id="ENSMUST00000023474.4">
    <property type="protein sequence ID" value="ENSMUSP00000023474.4"/>
    <property type="gene ID" value="ENSMUSG00000022787.11"/>
</dbReference>
<dbReference type="Ensembl" id="ENSMUST00000178573.8">
    <property type="protein sequence ID" value="ENSMUSP00000135908.2"/>
    <property type="gene ID" value="ENSMUSG00000022787.11"/>
</dbReference>
<dbReference type="GeneID" id="68980"/>
<dbReference type="KEGG" id="mmu:68980"/>
<dbReference type="UCSC" id="uc007yym.2">
    <property type="organism name" value="mouse"/>
</dbReference>
<dbReference type="AGR" id="MGI:1916230"/>
<dbReference type="CTD" id="348793"/>
<dbReference type="MGI" id="MGI:1916230">
    <property type="gene designation" value="Wdr53"/>
</dbReference>
<dbReference type="VEuPathDB" id="HostDB:ENSMUSG00000022787"/>
<dbReference type="eggNOG" id="ENOG502QQ86">
    <property type="taxonomic scope" value="Eukaryota"/>
</dbReference>
<dbReference type="GeneTree" id="ENSGT00390000011073"/>
<dbReference type="HOGENOM" id="CLU_057939_1_0_1"/>
<dbReference type="InParanoid" id="Q9DB94"/>
<dbReference type="OMA" id="GDLMVWG"/>
<dbReference type="OrthoDB" id="2161379at2759"/>
<dbReference type="PhylomeDB" id="Q9DB94"/>
<dbReference type="TreeFam" id="TF331160"/>
<dbReference type="BioGRID-ORCS" id="68980">
    <property type="hits" value="0 hits in 77 CRISPR screens"/>
</dbReference>
<dbReference type="ChiTaRS" id="Wdr53">
    <property type="organism name" value="mouse"/>
</dbReference>
<dbReference type="PRO" id="PR:Q9DB94"/>
<dbReference type="Proteomes" id="UP000000589">
    <property type="component" value="Chromosome 16"/>
</dbReference>
<dbReference type="RNAct" id="Q9DB94">
    <property type="molecule type" value="protein"/>
</dbReference>
<dbReference type="Bgee" id="ENSMUSG00000022787">
    <property type="expression patterns" value="Expressed in spermatid and 209 other cell types or tissues"/>
</dbReference>
<dbReference type="ExpressionAtlas" id="Q9DB94">
    <property type="expression patterns" value="baseline and differential"/>
</dbReference>
<dbReference type="Gene3D" id="2.130.10.10">
    <property type="entry name" value="YVTN repeat-like/Quinoprotein amine dehydrogenase"/>
    <property type="match status" value="2"/>
</dbReference>
<dbReference type="InterPro" id="IPR015943">
    <property type="entry name" value="WD40/YVTN_repeat-like_dom_sf"/>
</dbReference>
<dbReference type="InterPro" id="IPR019775">
    <property type="entry name" value="WD40_repeat_CS"/>
</dbReference>
<dbReference type="InterPro" id="IPR036322">
    <property type="entry name" value="WD40_repeat_dom_sf"/>
</dbReference>
<dbReference type="InterPro" id="IPR001680">
    <property type="entry name" value="WD40_rpt"/>
</dbReference>
<dbReference type="InterPro" id="IPR042453">
    <property type="entry name" value="WDR53"/>
</dbReference>
<dbReference type="PANTHER" id="PTHR44666">
    <property type="entry name" value="WD REPEAT-CONTAINING PROTEIN 53"/>
    <property type="match status" value="1"/>
</dbReference>
<dbReference type="PANTHER" id="PTHR44666:SF1">
    <property type="entry name" value="WD REPEAT-CONTAINING PROTEIN 53"/>
    <property type="match status" value="1"/>
</dbReference>
<dbReference type="Pfam" id="PF00400">
    <property type="entry name" value="WD40"/>
    <property type="match status" value="2"/>
</dbReference>
<dbReference type="SMART" id="SM00320">
    <property type="entry name" value="WD40"/>
    <property type="match status" value="5"/>
</dbReference>
<dbReference type="SUPFAM" id="SSF50978">
    <property type="entry name" value="WD40 repeat-like"/>
    <property type="match status" value="1"/>
</dbReference>
<dbReference type="PROSITE" id="PS00678">
    <property type="entry name" value="WD_REPEATS_1"/>
    <property type="match status" value="1"/>
</dbReference>
<dbReference type="PROSITE" id="PS50082">
    <property type="entry name" value="WD_REPEATS_2"/>
    <property type="match status" value="2"/>
</dbReference>
<dbReference type="PROSITE" id="PS50294">
    <property type="entry name" value="WD_REPEATS_REGION"/>
    <property type="match status" value="1"/>
</dbReference>
<protein>
    <recommendedName>
        <fullName>WD repeat-containing protein 53</fullName>
    </recommendedName>
</protein>
<organism>
    <name type="scientific">Mus musculus</name>
    <name type="common">Mouse</name>
    <dbReference type="NCBI Taxonomy" id="10090"/>
    <lineage>
        <taxon>Eukaryota</taxon>
        <taxon>Metazoa</taxon>
        <taxon>Chordata</taxon>
        <taxon>Craniata</taxon>
        <taxon>Vertebrata</taxon>
        <taxon>Euteleostomi</taxon>
        <taxon>Mammalia</taxon>
        <taxon>Eutheria</taxon>
        <taxon>Euarchontoglires</taxon>
        <taxon>Glires</taxon>
        <taxon>Rodentia</taxon>
        <taxon>Myomorpha</taxon>
        <taxon>Muroidea</taxon>
        <taxon>Muridae</taxon>
        <taxon>Murinae</taxon>
        <taxon>Mus</taxon>
        <taxon>Mus</taxon>
    </lineage>
</organism>
<comment type="similarity">
    <text evidence="2">Belongs to the WD repeat WDR53 family.</text>
</comment>
<proteinExistence type="evidence at protein level"/>
<gene>
    <name type="primary">Wdr53</name>
</gene>
<accession>Q9DB94</accession>
<keyword id="KW-1185">Reference proteome</keyword>
<keyword id="KW-0677">Repeat</keyword>
<keyword id="KW-0853">WD repeat</keyword>
<feature type="chain" id="PRO_0000051414" description="WD repeat-containing protein 53">
    <location>
        <begin position="1"/>
        <end position="358"/>
    </location>
</feature>
<feature type="repeat" description="WD 1">
    <location>
        <begin position="8"/>
        <end position="47"/>
    </location>
</feature>
<feature type="repeat" description="WD 2">
    <location>
        <begin position="92"/>
        <end position="131"/>
    </location>
</feature>
<feature type="repeat" description="WD 3">
    <location>
        <begin position="134"/>
        <end position="174"/>
    </location>
</feature>
<feature type="repeat" description="WD 4">
    <location>
        <begin position="195"/>
        <end position="234"/>
    </location>
</feature>
<feature type="repeat" description="WD 5">
    <location>
        <begin position="239"/>
        <end position="278"/>
    </location>
</feature>
<feature type="region of interest" description="Disordered" evidence="1">
    <location>
        <begin position="288"/>
        <end position="309"/>
    </location>
</feature>
<name>WDR53_MOUSE</name>
<reference key="1">
    <citation type="journal article" date="2005" name="Science">
        <title>The transcriptional landscape of the mammalian genome.</title>
        <authorList>
            <person name="Carninci P."/>
            <person name="Kasukawa T."/>
            <person name="Katayama S."/>
            <person name="Gough J."/>
            <person name="Frith M.C."/>
            <person name="Maeda N."/>
            <person name="Oyama R."/>
            <person name="Ravasi T."/>
            <person name="Lenhard B."/>
            <person name="Wells C."/>
            <person name="Kodzius R."/>
            <person name="Shimokawa K."/>
            <person name="Bajic V.B."/>
            <person name="Brenner S.E."/>
            <person name="Batalov S."/>
            <person name="Forrest A.R."/>
            <person name="Zavolan M."/>
            <person name="Davis M.J."/>
            <person name="Wilming L.G."/>
            <person name="Aidinis V."/>
            <person name="Allen J.E."/>
            <person name="Ambesi-Impiombato A."/>
            <person name="Apweiler R."/>
            <person name="Aturaliya R.N."/>
            <person name="Bailey T.L."/>
            <person name="Bansal M."/>
            <person name="Baxter L."/>
            <person name="Beisel K.W."/>
            <person name="Bersano T."/>
            <person name="Bono H."/>
            <person name="Chalk A.M."/>
            <person name="Chiu K.P."/>
            <person name="Choudhary V."/>
            <person name="Christoffels A."/>
            <person name="Clutterbuck D.R."/>
            <person name="Crowe M.L."/>
            <person name="Dalla E."/>
            <person name="Dalrymple B.P."/>
            <person name="de Bono B."/>
            <person name="Della Gatta G."/>
            <person name="di Bernardo D."/>
            <person name="Down T."/>
            <person name="Engstrom P."/>
            <person name="Fagiolini M."/>
            <person name="Faulkner G."/>
            <person name="Fletcher C.F."/>
            <person name="Fukushima T."/>
            <person name="Furuno M."/>
            <person name="Futaki S."/>
            <person name="Gariboldi M."/>
            <person name="Georgii-Hemming P."/>
            <person name="Gingeras T.R."/>
            <person name="Gojobori T."/>
            <person name="Green R.E."/>
            <person name="Gustincich S."/>
            <person name="Harbers M."/>
            <person name="Hayashi Y."/>
            <person name="Hensch T.K."/>
            <person name="Hirokawa N."/>
            <person name="Hill D."/>
            <person name="Huminiecki L."/>
            <person name="Iacono M."/>
            <person name="Ikeo K."/>
            <person name="Iwama A."/>
            <person name="Ishikawa T."/>
            <person name="Jakt M."/>
            <person name="Kanapin A."/>
            <person name="Katoh M."/>
            <person name="Kawasawa Y."/>
            <person name="Kelso J."/>
            <person name="Kitamura H."/>
            <person name="Kitano H."/>
            <person name="Kollias G."/>
            <person name="Krishnan S.P."/>
            <person name="Kruger A."/>
            <person name="Kummerfeld S.K."/>
            <person name="Kurochkin I.V."/>
            <person name="Lareau L.F."/>
            <person name="Lazarevic D."/>
            <person name="Lipovich L."/>
            <person name="Liu J."/>
            <person name="Liuni S."/>
            <person name="McWilliam S."/>
            <person name="Madan Babu M."/>
            <person name="Madera M."/>
            <person name="Marchionni L."/>
            <person name="Matsuda H."/>
            <person name="Matsuzawa S."/>
            <person name="Miki H."/>
            <person name="Mignone F."/>
            <person name="Miyake S."/>
            <person name="Morris K."/>
            <person name="Mottagui-Tabar S."/>
            <person name="Mulder N."/>
            <person name="Nakano N."/>
            <person name="Nakauchi H."/>
            <person name="Ng P."/>
            <person name="Nilsson R."/>
            <person name="Nishiguchi S."/>
            <person name="Nishikawa S."/>
            <person name="Nori F."/>
            <person name="Ohara O."/>
            <person name="Okazaki Y."/>
            <person name="Orlando V."/>
            <person name="Pang K.C."/>
            <person name="Pavan W.J."/>
            <person name="Pavesi G."/>
            <person name="Pesole G."/>
            <person name="Petrovsky N."/>
            <person name="Piazza S."/>
            <person name="Reed J."/>
            <person name="Reid J.F."/>
            <person name="Ring B.Z."/>
            <person name="Ringwald M."/>
            <person name="Rost B."/>
            <person name="Ruan Y."/>
            <person name="Salzberg S.L."/>
            <person name="Sandelin A."/>
            <person name="Schneider C."/>
            <person name="Schoenbach C."/>
            <person name="Sekiguchi K."/>
            <person name="Semple C.A."/>
            <person name="Seno S."/>
            <person name="Sessa L."/>
            <person name="Sheng Y."/>
            <person name="Shibata Y."/>
            <person name="Shimada H."/>
            <person name="Shimada K."/>
            <person name="Silva D."/>
            <person name="Sinclair B."/>
            <person name="Sperling S."/>
            <person name="Stupka E."/>
            <person name="Sugiura K."/>
            <person name="Sultana R."/>
            <person name="Takenaka Y."/>
            <person name="Taki K."/>
            <person name="Tammoja K."/>
            <person name="Tan S.L."/>
            <person name="Tang S."/>
            <person name="Taylor M.S."/>
            <person name="Tegner J."/>
            <person name="Teichmann S.A."/>
            <person name="Ueda H.R."/>
            <person name="van Nimwegen E."/>
            <person name="Verardo R."/>
            <person name="Wei C.L."/>
            <person name="Yagi K."/>
            <person name="Yamanishi H."/>
            <person name="Zabarovsky E."/>
            <person name="Zhu S."/>
            <person name="Zimmer A."/>
            <person name="Hide W."/>
            <person name="Bult C."/>
            <person name="Grimmond S.M."/>
            <person name="Teasdale R.D."/>
            <person name="Liu E.T."/>
            <person name="Brusic V."/>
            <person name="Quackenbush J."/>
            <person name="Wahlestedt C."/>
            <person name="Mattick J.S."/>
            <person name="Hume D.A."/>
            <person name="Kai C."/>
            <person name="Sasaki D."/>
            <person name="Tomaru Y."/>
            <person name="Fukuda S."/>
            <person name="Kanamori-Katayama M."/>
            <person name="Suzuki M."/>
            <person name="Aoki J."/>
            <person name="Arakawa T."/>
            <person name="Iida J."/>
            <person name="Imamura K."/>
            <person name="Itoh M."/>
            <person name="Kato T."/>
            <person name="Kawaji H."/>
            <person name="Kawagashira N."/>
            <person name="Kawashima T."/>
            <person name="Kojima M."/>
            <person name="Kondo S."/>
            <person name="Konno H."/>
            <person name="Nakano K."/>
            <person name="Ninomiya N."/>
            <person name="Nishio T."/>
            <person name="Okada M."/>
            <person name="Plessy C."/>
            <person name="Shibata K."/>
            <person name="Shiraki T."/>
            <person name="Suzuki S."/>
            <person name="Tagami M."/>
            <person name="Waki K."/>
            <person name="Watahiki A."/>
            <person name="Okamura-Oho Y."/>
            <person name="Suzuki H."/>
            <person name="Kawai J."/>
            <person name="Hayashizaki Y."/>
        </authorList>
    </citation>
    <scope>NUCLEOTIDE SEQUENCE [LARGE SCALE MRNA]</scope>
    <source>
        <strain>C57BL/6J</strain>
        <tissue>Cerebellum</tissue>
    </source>
</reference>
<reference key="2">
    <citation type="journal article" date="2004" name="Genome Res.">
        <title>The status, quality, and expansion of the NIH full-length cDNA project: the Mammalian Gene Collection (MGC).</title>
        <authorList>
            <consortium name="The MGC Project Team"/>
        </authorList>
    </citation>
    <scope>NUCLEOTIDE SEQUENCE [LARGE SCALE MRNA]</scope>
    <source>
        <tissue>Mammary tumor</tissue>
    </source>
</reference>
<reference key="3">
    <citation type="journal article" date="2010" name="Cell">
        <title>A tissue-specific atlas of mouse protein phosphorylation and expression.</title>
        <authorList>
            <person name="Huttlin E.L."/>
            <person name="Jedrychowski M.P."/>
            <person name="Elias J.E."/>
            <person name="Goswami T."/>
            <person name="Rad R."/>
            <person name="Beausoleil S.A."/>
            <person name="Villen J."/>
            <person name="Haas W."/>
            <person name="Sowa M.E."/>
            <person name="Gygi S.P."/>
        </authorList>
    </citation>
    <scope>IDENTIFICATION BY MASS SPECTROMETRY [LARGE SCALE ANALYSIS]</scope>
    <source>
        <tissue>Testis</tissue>
    </source>
</reference>
<evidence type="ECO:0000256" key="1">
    <source>
        <dbReference type="SAM" id="MobiDB-lite"/>
    </source>
</evidence>
<evidence type="ECO:0000305" key="2"/>